<gene>
    <name type="primary">gh</name>
</gene>
<keyword id="KW-1015">Disulfide bond</keyword>
<keyword id="KW-0372">Hormone</keyword>
<keyword id="KW-0479">Metal-binding</keyword>
<keyword id="KW-0873">Pyrrolidone carboxylic acid</keyword>
<keyword id="KW-0964">Secreted</keyword>
<keyword id="KW-0732">Signal</keyword>
<keyword id="KW-0862">Zinc</keyword>
<sequence length="203" mass="22900">MDRVVLMLSVLSLGVSSQPITDGQRLFSIAVSRVQHLHLLAQRLFSDFESSLQTEEQLKLNKIFPDFCNSDYIISPIDKHETQRSSVLKLLSISYRLVESWEFPSRSLSGGSAPRNQISPKLSELKMGIHLLIRANEDGAEIFPDSSALQLAPYGNYYQSLGADESLRRTYELLACFKKDMHKVETYLTVAKCRLSPEANCTL</sequence>
<feature type="signal peptide" evidence="1">
    <location>
        <begin position="1"/>
        <end position="17"/>
    </location>
</feature>
<feature type="chain" id="PRO_0000033044" description="Somatotropin">
    <location>
        <begin position="18"/>
        <end position="203"/>
    </location>
</feature>
<feature type="binding site" evidence="1">
    <location>
        <position position="36"/>
    </location>
    <ligand>
        <name>Zn(2+)</name>
        <dbReference type="ChEBI" id="CHEBI:29105"/>
    </ligand>
</feature>
<feature type="binding site" evidence="1">
    <location>
        <position position="185"/>
    </location>
    <ligand>
        <name>Zn(2+)</name>
        <dbReference type="ChEBI" id="CHEBI:29105"/>
    </ligand>
</feature>
<feature type="modified residue" description="Pyrrolidone carboxylic acid" evidence="1">
    <location>
        <position position="18"/>
    </location>
</feature>
<feature type="disulfide bond" evidence="1">
    <location>
        <begin position="68"/>
        <end position="176"/>
    </location>
</feature>
<feature type="disulfide bond" evidence="1">
    <location>
        <begin position="193"/>
        <end position="201"/>
    </location>
</feature>
<protein>
    <recommendedName>
        <fullName>Somatotropin</fullName>
    </recommendedName>
    <alternativeName>
        <fullName>Growth hormone</fullName>
    </alternativeName>
</protein>
<proteinExistence type="evidence at transcript level"/>
<name>SOMA_PAGMA</name>
<organism>
    <name type="scientific">Pagrus major</name>
    <name type="common">Red sea bream</name>
    <name type="synonym">Chrysophrys major</name>
    <dbReference type="NCBI Taxonomy" id="143350"/>
    <lineage>
        <taxon>Eukaryota</taxon>
        <taxon>Metazoa</taxon>
        <taxon>Chordata</taxon>
        <taxon>Craniata</taxon>
        <taxon>Vertebrata</taxon>
        <taxon>Euteleostomi</taxon>
        <taxon>Actinopterygii</taxon>
        <taxon>Neopterygii</taxon>
        <taxon>Teleostei</taxon>
        <taxon>Neoteleostei</taxon>
        <taxon>Acanthomorphata</taxon>
        <taxon>Eupercaria</taxon>
        <taxon>Spariformes</taxon>
        <taxon>Sparidae</taxon>
        <taxon>Pagrus</taxon>
    </lineage>
</organism>
<dbReference type="EMBL" id="X06962">
    <property type="protein sequence ID" value="CAA30033.1"/>
    <property type="molecule type" value="mRNA"/>
</dbReference>
<dbReference type="PIR" id="S00747">
    <property type="entry name" value="S00747"/>
</dbReference>
<dbReference type="SMR" id="P08591"/>
<dbReference type="GO" id="GO:0005615">
    <property type="term" value="C:extracellular space"/>
    <property type="evidence" value="ECO:0007669"/>
    <property type="project" value="InterPro"/>
</dbReference>
<dbReference type="GO" id="GO:0070186">
    <property type="term" value="F:growth hormone activity"/>
    <property type="evidence" value="ECO:0007669"/>
    <property type="project" value="TreeGrafter"/>
</dbReference>
<dbReference type="GO" id="GO:0005131">
    <property type="term" value="F:growth hormone receptor binding"/>
    <property type="evidence" value="ECO:0007669"/>
    <property type="project" value="InterPro"/>
</dbReference>
<dbReference type="GO" id="GO:0046872">
    <property type="term" value="F:metal ion binding"/>
    <property type="evidence" value="ECO:0007669"/>
    <property type="project" value="UniProtKB-KW"/>
</dbReference>
<dbReference type="GO" id="GO:0048513">
    <property type="term" value="P:animal organ development"/>
    <property type="evidence" value="ECO:0007669"/>
    <property type="project" value="TreeGrafter"/>
</dbReference>
<dbReference type="GO" id="GO:0060396">
    <property type="term" value="P:growth hormone receptor signaling pathway"/>
    <property type="evidence" value="ECO:0007669"/>
    <property type="project" value="TreeGrafter"/>
</dbReference>
<dbReference type="GO" id="GO:0045927">
    <property type="term" value="P:positive regulation of growth"/>
    <property type="evidence" value="ECO:0007669"/>
    <property type="project" value="TreeGrafter"/>
</dbReference>
<dbReference type="GO" id="GO:0046427">
    <property type="term" value="P:positive regulation of receptor signaling pathway via JAK-STAT"/>
    <property type="evidence" value="ECO:0007669"/>
    <property type="project" value="TreeGrafter"/>
</dbReference>
<dbReference type="GO" id="GO:0031667">
    <property type="term" value="P:response to nutrient levels"/>
    <property type="evidence" value="ECO:0007669"/>
    <property type="project" value="TreeGrafter"/>
</dbReference>
<dbReference type="CDD" id="cd10285">
    <property type="entry name" value="somatotropin_like"/>
    <property type="match status" value="1"/>
</dbReference>
<dbReference type="FunFam" id="1.20.1250.10:FF:000009">
    <property type="entry name" value="Growth hormone"/>
    <property type="match status" value="1"/>
</dbReference>
<dbReference type="Gene3D" id="1.20.1250.10">
    <property type="match status" value="1"/>
</dbReference>
<dbReference type="InterPro" id="IPR009079">
    <property type="entry name" value="4_helix_cytokine-like_core"/>
</dbReference>
<dbReference type="InterPro" id="IPR034975">
    <property type="entry name" value="Somatotropin"/>
</dbReference>
<dbReference type="InterPro" id="IPR001400">
    <property type="entry name" value="Somatotropin/Prolactin"/>
</dbReference>
<dbReference type="InterPro" id="IPR018116">
    <property type="entry name" value="Somatotropin_CS"/>
</dbReference>
<dbReference type="PANTHER" id="PTHR11417:SF2">
    <property type="entry name" value="SOMATOTROPIN"/>
    <property type="match status" value="1"/>
</dbReference>
<dbReference type="PANTHER" id="PTHR11417">
    <property type="entry name" value="SOMATOTROPIN,PROLACTIN"/>
    <property type="match status" value="1"/>
</dbReference>
<dbReference type="Pfam" id="PF00103">
    <property type="entry name" value="Hormone_1"/>
    <property type="match status" value="1"/>
</dbReference>
<dbReference type="PRINTS" id="PR00836">
    <property type="entry name" value="SOMATOTROPIN"/>
</dbReference>
<dbReference type="SUPFAM" id="SSF47266">
    <property type="entry name" value="4-helical cytokines"/>
    <property type="match status" value="1"/>
</dbReference>
<dbReference type="PROSITE" id="PS00266">
    <property type="entry name" value="SOMATOTROPIN_1"/>
    <property type="match status" value="1"/>
</dbReference>
<dbReference type="PROSITE" id="PS00338">
    <property type="entry name" value="SOMATOTROPIN_2"/>
    <property type="match status" value="1"/>
</dbReference>
<comment type="function">
    <text>Growth hormone plays an important role in growth control and is involved in the regulation of several anabolic processes. Implicated as an osmoregulatory substance important for seawater adaptation.</text>
</comment>
<comment type="subcellular location">
    <subcellularLocation>
        <location>Secreted</location>
    </subcellularLocation>
</comment>
<comment type="similarity">
    <text evidence="2">Belongs to the somatotropin/prolactin family.</text>
</comment>
<evidence type="ECO:0000250" key="1"/>
<evidence type="ECO:0000305" key="2"/>
<accession>P08591</accession>
<reference key="1">
    <citation type="journal article" date="1988" name="Nucleic Acids Res.">
        <title>Nucleotide sequence of cDNA encoding the pregrowth hormone of red sea bream (Pagrus major).</title>
        <authorList>
            <person name="Momota H."/>
            <person name="Kosugi R."/>
            <person name="Hiramatsu H."/>
            <person name="Ohgai H."/>
            <person name="Hara A."/>
            <person name="Ishioka H."/>
        </authorList>
    </citation>
    <scope>NUCLEOTIDE SEQUENCE [MRNA]</scope>
    <source>
        <tissue>Pituitary</tissue>
    </source>
</reference>